<protein>
    <recommendedName>
        <fullName evidence="1">HTH-type transcriptional regulator HdfR</fullName>
    </recommendedName>
    <alternativeName>
        <fullName evidence="1">H-NS-dependent flhDC regulator</fullName>
    </alternativeName>
</protein>
<comment type="function">
    <text evidence="1">Negatively regulates the transcription of the flagellar master operon flhDC by binding to the upstream region of the operon.</text>
</comment>
<comment type="similarity">
    <text evidence="2">Belongs to the LysR transcriptional regulatory family.</text>
</comment>
<accession>B4TAZ8</accession>
<proteinExistence type="inferred from homology"/>
<reference key="1">
    <citation type="journal article" date="2011" name="J. Bacteriol.">
        <title>Comparative genomics of 28 Salmonella enterica isolates: evidence for CRISPR-mediated adaptive sublineage evolution.</title>
        <authorList>
            <person name="Fricke W.F."/>
            <person name="Mammel M.K."/>
            <person name="McDermott P.F."/>
            <person name="Tartera C."/>
            <person name="White D.G."/>
            <person name="Leclerc J.E."/>
            <person name="Ravel J."/>
            <person name="Cebula T.A."/>
        </authorList>
    </citation>
    <scope>NUCLEOTIDE SEQUENCE [LARGE SCALE GENOMIC DNA]</scope>
    <source>
        <strain>SL476</strain>
    </source>
</reference>
<sequence>MDTELLKTFLEVSRTRHFGRAAEALYLTQSAVSFRIRQLENQLGVNLFTRHRNNIRLTTAGEKLLPYAETLMNTWQAARKEVAHTSRHNEFSIGASASLWECMLNAWLGRLYQLQEPQSGLQFEARIAQRQSLVKQLHERQLDLLITTEAPKMDEFSSQLLGHFTLALYCSSPARKKSELNYLRLEWGPDFQQHETGLIAADEVPVLTTSSAELARQQLSALNGCSWLPVNWANEKGGLHTVADSATLSRPLYAIWLQNSDKYSLICDLLKTDVLDEQ</sequence>
<organism>
    <name type="scientific">Salmonella heidelberg (strain SL476)</name>
    <dbReference type="NCBI Taxonomy" id="454169"/>
    <lineage>
        <taxon>Bacteria</taxon>
        <taxon>Pseudomonadati</taxon>
        <taxon>Pseudomonadota</taxon>
        <taxon>Gammaproteobacteria</taxon>
        <taxon>Enterobacterales</taxon>
        <taxon>Enterobacteriaceae</taxon>
        <taxon>Salmonella</taxon>
    </lineage>
</organism>
<keyword id="KW-0238">DNA-binding</keyword>
<keyword id="KW-0678">Repressor</keyword>
<keyword id="KW-0804">Transcription</keyword>
<keyword id="KW-0805">Transcription regulation</keyword>
<name>HDFR_SALHS</name>
<dbReference type="EMBL" id="CP001120">
    <property type="protein sequence ID" value="ACF66319.1"/>
    <property type="molecule type" value="Genomic_DNA"/>
</dbReference>
<dbReference type="SMR" id="B4TAZ8"/>
<dbReference type="KEGG" id="seh:SeHA_C4229"/>
<dbReference type="HOGENOM" id="CLU_039613_8_2_6"/>
<dbReference type="Proteomes" id="UP000001866">
    <property type="component" value="Chromosome"/>
</dbReference>
<dbReference type="GO" id="GO:0003677">
    <property type="term" value="F:DNA binding"/>
    <property type="evidence" value="ECO:0007669"/>
    <property type="project" value="UniProtKB-KW"/>
</dbReference>
<dbReference type="GO" id="GO:0003700">
    <property type="term" value="F:DNA-binding transcription factor activity"/>
    <property type="evidence" value="ECO:0007669"/>
    <property type="project" value="UniProtKB-UniRule"/>
</dbReference>
<dbReference type="GO" id="GO:0045892">
    <property type="term" value="P:negative regulation of DNA-templated transcription"/>
    <property type="evidence" value="ECO:0007669"/>
    <property type="project" value="UniProtKB-UniRule"/>
</dbReference>
<dbReference type="FunFam" id="1.10.10.10:FF:000001">
    <property type="entry name" value="LysR family transcriptional regulator"/>
    <property type="match status" value="1"/>
</dbReference>
<dbReference type="Gene3D" id="1.10.10.10">
    <property type="entry name" value="Winged helix-like DNA-binding domain superfamily/Winged helix DNA-binding domain"/>
    <property type="match status" value="1"/>
</dbReference>
<dbReference type="HAMAP" id="MF_01233">
    <property type="entry name" value="HTH_type_HdfR"/>
    <property type="match status" value="1"/>
</dbReference>
<dbReference type="InterPro" id="IPR050176">
    <property type="entry name" value="LTTR"/>
</dbReference>
<dbReference type="InterPro" id="IPR005119">
    <property type="entry name" value="LysR_subst-bd"/>
</dbReference>
<dbReference type="InterPro" id="IPR020890">
    <property type="entry name" value="Tscrpt_reg_HTH_HdfR"/>
</dbReference>
<dbReference type="InterPro" id="IPR000847">
    <property type="entry name" value="Tscrpt_reg_HTH_LysR"/>
</dbReference>
<dbReference type="InterPro" id="IPR036388">
    <property type="entry name" value="WH-like_DNA-bd_sf"/>
</dbReference>
<dbReference type="InterPro" id="IPR036390">
    <property type="entry name" value="WH_DNA-bd_sf"/>
</dbReference>
<dbReference type="NCBIfam" id="NF002946">
    <property type="entry name" value="PRK03601.1"/>
    <property type="match status" value="1"/>
</dbReference>
<dbReference type="PANTHER" id="PTHR30579:SF8">
    <property type="entry name" value="HTH-TYPE TRANSCRIPTIONAL REGULATOR HDFR"/>
    <property type="match status" value="1"/>
</dbReference>
<dbReference type="PANTHER" id="PTHR30579">
    <property type="entry name" value="TRANSCRIPTIONAL REGULATOR"/>
    <property type="match status" value="1"/>
</dbReference>
<dbReference type="Pfam" id="PF00126">
    <property type="entry name" value="HTH_1"/>
    <property type="match status" value="1"/>
</dbReference>
<dbReference type="Pfam" id="PF03466">
    <property type="entry name" value="LysR_substrate"/>
    <property type="match status" value="1"/>
</dbReference>
<dbReference type="PRINTS" id="PR00039">
    <property type="entry name" value="HTHLYSR"/>
</dbReference>
<dbReference type="SUPFAM" id="SSF53850">
    <property type="entry name" value="Periplasmic binding protein-like II"/>
    <property type="match status" value="1"/>
</dbReference>
<dbReference type="SUPFAM" id="SSF46785">
    <property type="entry name" value="Winged helix' DNA-binding domain"/>
    <property type="match status" value="1"/>
</dbReference>
<dbReference type="PROSITE" id="PS50931">
    <property type="entry name" value="HTH_LYSR"/>
    <property type="match status" value="1"/>
</dbReference>
<gene>
    <name evidence="1" type="primary">hdfR</name>
    <name type="ordered locus">SeHA_C4229</name>
</gene>
<feature type="chain" id="PRO_1000139673" description="HTH-type transcriptional regulator HdfR">
    <location>
        <begin position="1"/>
        <end position="278"/>
    </location>
</feature>
<feature type="domain" description="HTH lysR-type" evidence="1">
    <location>
        <begin position="1"/>
        <end position="58"/>
    </location>
</feature>
<feature type="DNA-binding region" description="H-T-H motif" evidence="1">
    <location>
        <begin position="18"/>
        <end position="37"/>
    </location>
</feature>
<evidence type="ECO:0000255" key="1">
    <source>
        <dbReference type="HAMAP-Rule" id="MF_01233"/>
    </source>
</evidence>
<evidence type="ECO:0000305" key="2"/>